<protein>
    <recommendedName>
        <fullName evidence="1">Bifunctional protein PyrR</fullName>
    </recommendedName>
    <domain>
        <recommendedName>
            <fullName evidence="1">Pyrimidine operon regulatory protein</fullName>
        </recommendedName>
    </domain>
    <domain>
        <recommendedName>
            <fullName evidence="1">Uracil phosphoribosyltransferase</fullName>
            <shortName evidence="1">UPRTase</shortName>
            <ecNumber evidence="1">2.4.2.9</ecNumber>
        </recommendedName>
    </domain>
</protein>
<feature type="chain" id="PRO_1000053817" description="Bifunctional protein PyrR">
    <location>
        <begin position="1"/>
        <end position="179"/>
    </location>
</feature>
<feature type="short sequence motif" description="PRPP-binding" evidence="1">
    <location>
        <begin position="97"/>
        <end position="109"/>
    </location>
</feature>
<keyword id="KW-0328">Glycosyltransferase</keyword>
<keyword id="KW-1185">Reference proteome</keyword>
<keyword id="KW-0804">Transcription</keyword>
<keyword id="KW-0805">Transcription regulation</keyword>
<keyword id="KW-0808">Transferase</keyword>
<name>PYRR_ACTP2</name>
<accession>A3MZB9</accession>
<reference key="1">
    <citation type="journal article" date="2008" name="J. Bacteriol.">
        <title>The complete genome sequence of Actinobacillus pleuropneumoniae L20 (serotype 5b).</title>
        <authorList>
            <person name="Foote S.J."/>
            <person name="Bosse J.T."/>
            <person name="Bouevitch A.B."/>
            <person name="Langford P.R."/>
            <person name="Young N.M."/>
            <person name="Nash J.H.E."/>
        </authorList>
    </citation>
    <scope>NUCLEOTIDE SEQUENCE [LARGE SCALE GENOMIC DNA]</scope>
    <source>
        <strain>L20</strain>
    </source>
</reference>
<evidence type="ECO:0000255" key="1">
    <source>
        <dbReference type="HAMAP-Rule" id="MF_01219"/>
    </source>
</evidence>
<proteinExistence type="inferred from homology"/>
<comment type="function">
    <text evidence="1">Regulates the transcription of the pyrimidine nucleotide (pyr) operon in response to exogenous pyrimidines.</text>
</comment>
<comment type="function">
    <text evidence="1">Also displays a weak uracil phosphoribosyltransferase activity which is not physiologically significant.</text>
</comment>
<comment type="catalytic activity">
    <reaction evidence="1">
        <text>UMP + diphosphate = 5-phospho-alpha-D-ribose 1-diphosphate + uracil</text>
        <dbReference type="Rhea" id="RHEA:13017"/>
        <dbReference type="ChEBI" id="CHEBI:17568"/>
        <dbReference type="ChEBI" id="CHEBI:33019"/>
        <dbReference type="ChEBI" id="CHEBI:57865"/>
        <dbReference type="ChEBI" id="CHEBI:58017"/>
        <dbReference type="EC" id="2.4.2.9"/>
    </reaction>
</comment>
<comment type="similarity">
    <text evidence="1">Belongs to the purine/pyrimidine phosphoribosyltransferase family. PyrR subfamily.</text>
</comment>
<sequence>MEKIIIDAEQFQRTISRISHQIIEKHSSLDNLVLVGIKRRGAEIAEMLQSRIAELAQTELPLMALDITFYRDDLHLDHQDPVYTGVESQIDITGKNVILIDDVLFTGRTIRAALDALLDFGRATRIELVILVDRGHRELPIRADYVGKNIPTARTEQVQVRTQFYDGMNQVVLIRAKDE</sequence>
<dbReference type="EC" id="2.4.2.9" evidence="1"/>
<dbReference type="EMBL" id="CP000569">
    <property type="protein sequence ID" value="ABN73505.1"/>
    <property type="molecule type" value="Genomic_DNA"/>
</dbReference>
<dbReference type="RefSeq" id="WP_005600504.1">
    <property type="nucleotide sequence ID" value="NC_009053.1"/>
</dbReference>
<dbReference type="SMR" id="A3MZB9"/>
<dbReference type="STRING" id="416269.APL_0401"/>
<dbReference type="EnsemblBacteria" id="ABN73505">
    <property type="protein sequence ID" value="ABN73505"/>
    <property type="gene ID" value="APL_0401"/>
</dbReference>
<dbReference type="KEGG" id="apl:APL_0401"/>
<dbReference type="eggNOG" id="COG2065">
    <property type="taxonomic scope" value="Bacteria"/>
</dbReference>
<dbReference type="HOGENOM" id="CLU_094234_2_1_6"/>
<dbReference type="Proteomes" id="UP000001432">
    <property type="component" value="Chromosome"/>
</dbReference>
<dbReference type="GO" id="GO:0004845">
    <property type="term" value="F:uracil phosphoribosyltransferase activity"/>
    <property type="evidence" value="ECO:0007669"/>
    <property type="project" value="UniProtKB-UniRule"/>
</dbReference>
<dbReference type="GO" id="GO:0006355">
    <property type="term" value="P:regulation of DNA-templated transcription"/>
    <property type="evidence" value="ECO:0007669"/>
    <property type="project" value="UniProtKB-UniRule"/>
</dbReference>
<dbReference type="CDD" id="cd06223">
    <property type="entry name" value="PRTases_typeI"/>
    <property type="match status" value="1"/>
</dbReference>
<dbReference type="FunFam" id="3.40.50.2020:FF:000020">
    <property type="entry name" value="Bifunctional protein PyrR"/>
    <property type="match status" value="1"/>
</dbReference>
<dbReference type="Gene3D" id="3.40.50.2020">
    <property type="match status" value="1"/>
</dbReference>
<dbReference type="HAMAP" id="MF_01219">
    <property type="entry name" value="PyrR"/>
    <property type="match status" value="1"/>
</dbReference>
<dbReference type="InterPro" id="IPR000836">
    <property type="entry name" value="PRibTrfase_dom"/>
</dbReference>
<dbReference type="InterPro" id="IPR029057">
    <property type="entry name" value="PRTase-like"/>
</dbReference>
<dbReference type="InterPro" id="IPR023050">
    <property type="entry name" value="PyrR"/>
</dbReference>
<dbReference type="InterPro" id="IPR050137">
    <property type="entry name" value="PyrR_bifunctional"/>
</dbReference>
<dbReference type="NCBIfam" id="NF003549">
    <property type="entry name" value="PRK05205.1-5"/>
    <property type="match status" value="1"/>
</dbReference>
<dbReference type="PANTHER" id="PTHR11608">
    <property type="entry name" value="BIFUNCTIONAL PROTEIN PYRR"/>
    <property type="match status" value="1"/>
</dbReference>
<dbReference type="PANTHER" id="PTHR11608:SF0">
    <property type="entry name" value="BIFUNCTIONAL PROTEIN PYRR"/>
    <property type="match status" value="1"/>
</dbReference>
<dbReference type="Pfam" id="PF00156">
    <property type="entry name" value="Pribosyltran"/>
    <property type="match status" value="1"/>
</dbReference>
<dbReference type="SUPFAM" id="SSF53271">
    <property type="entry name" value="PRTase-like"/>
    <property type="match status" value="1"/>
</dbReference>
<organism>
    <name type="scientific">Actinobacillus pleuropneumoniae serotype 5b (strain L20)</name>
    <dbReference type="NCBI Taxonomy" id="416269"/>
    <lineage>
        <taxon>Bacteria</taxon>
        <taxon>Pseudomonadati</taxon>
        <taxon>Pseudomonadota</taxon>
        <taxon>Gammaproteobacteria</taxon>
        <taxon>Pasteurellales</taxon>
        <taxon>Pasteurellaceae</taxon>
        <taxon>Actinobacillus</taxon>
    </lineage>
</organism>
<gene>
    <name evidence="1" type="primary">pyrR</name>
    <name type="ordered locus">APL_0401</name>
</gene>